<name>YBGU_ECOLI</name>
<evidence type="ECO:0000269" key="1">
    <source>
    </source>
</evidence>
<evidence type="ECO:0000269" key="2">
    <source>
    </source>
</evidence>
<evidence type="ECO:0000303" key="3">
    <source>
    </source>
</evidence>
<keyword id="KW-1185">Reference proteome</keyword>
<protein>
    <recommendedName>
        <fullName evidence="3">Protein YbgU</fullName>
    </recommendedName>
</protein>
<sequence length="35" mass="3827">MRKSYEVGISPKINLCNSVEVLTNSFGTVISGRQV</sequence>
<accession>P0DPN5</accession>
<accession>A0A385XJP3</accession>
<gene>
    <name evidence="3" type="primary">ybgU</name>
    <name type="ordered locus">b4735</name>
</gene>
<dbReference type="EMBL" id="U00096">
    <property type="protein sequence ID" value="AYC08187.1"/>
    <property type="molecule type" value="Genomic_DNA"/>
</dbReference>
<dbReference type="EnsemblBacteria" id="AYC08187">
    <property type="protein sequence ID" value="AYC08187"/>
    <property type="gene ID" value="b4735"/>
</dbReference>
<dbReference type="InParanoid" id="P0DPN5"/>
<dbReference type="OrthoDB" id="6571623at2"/>
<dbReference type="BioCyc" id="EcoCyc:MONOMER0-4412"/>
<dbReference type="PRO" id="PR:P0DPN5"/>
<dbReference type="Proteomes" id="UP000000625">
    <property type="component" value="Chromosome"/>
</dbReference>
<dbReference type="Pfam" id="PF23495">
    <property type="entry name" value="YbgU"/>
    <property type="match status" value="1"/>
</dbReference>
<comment type="induction">
    <text evidence="1 2">Expressed in both exponential and stationary phase; expression is higher during stationary phase (at protein level).</text>
</comment>
<comment type="miscellaneous">
    <text evidence="2">This gene overlaps ybgV on the same strand in another reading frame.</text>
</comment>
<feature type="chain" id="PRO_0000445163" description="Protein YbgU">
    <location>
        <begin position="1"/>
        <end position="35"/>
    </location>
</feature>
<organism>
    <name type="scientific">Escherichia coli (strain K12)</name>
    <dbReference type="NCBI Taxonomy" id="83333"/>
    <lineage>
        <taxon>Bacteria</taxon>
        <taxon>Pseudomonadati</taxon>
        <taxon>Pseudomonadota</taxon>
        <taxon>Gammaproteobacteria</taxon>
        <taxon>Enterobacterales</taxon>
        <taxon>Enterobacteriaceae</taxon>
        <taxon>Escherichia</taxon>
    </lineage>
</organism>
<reference key="1">
    <citation type="journal article" date="1997" name="Science">
        <title>The complete genome sequence of Escherichia coli K-12.</title>
        <authorList>
            <person name="Blattner F.R."/>
            <person name="Plunkett G. III"/>
            <person name="Bloch C.A."/>
            <person name="Perna N.T."/>
            <person name="Burland V."/>
            <person name="Riley M."/>
            <person name="Collado-Vides J."/>
            <person name="Glasner J.D."/>
            <person name="Rode C.K."/>
            <person name="Mayhew G.F."/>
            <person name="Gregor J."/>
            <person name="Davis N.W."/>
            <person name="Kirkpatrick H.A."/>
            <person name="Goeden M.A."/>
            <person name="Rose D.J."/>
            <person name="Mau B."/>
            <person name="Shao Y."/>
        </authorList>
    </citation>
    <scope>NUCLEOTIDE SEQUENCE [LARGE SCALE GENOMIC DNA]</scope>
    <source>
        <strain>K12 / MG1655 / ATCC 47076</strain>
    </source>
</reference>
<reference key="2">
    <citation type="journal article" date="2018" name="Proteomics">
        <title>Identifying new small proteins in Escherichia coli.</title>
        <authorList>
            <person name="VanOrsdel C.E."/>
            <person name="Kelly J.P."/>
            <person name="Burke B.N."/>
            <person name="Lein C.D."/>
            <person name="Oufiero C.E."/>
            <person name="Sanchez J.F."/>
            <person name="Wimmers L.E."/>
            <person name="Hearn D.J."/>
            <person name="Abuikhdair F.J."/>
            <person name="Barnhart K.R."/>
            <person name="Duley M.L."/>
            <person name="Ernst S.E.G."/>
            <person name="Kenerson B.A."/>
            <person name="Serafin A.J."/>
            <person name="Hemm M.R."/>
        </authorList>
    </citation>
    <scope>IDENTIFICATION</scope>
    <scope>INDUCTION</scope>
</reference>
<reference key="3">
    <citation type="journal article" date="2019" name="MBio">
        <title>Identifying small proteins by ribosome profiling with stalled initiation complexes.</title>
        <authorList>
            <person name="Weaver J."/>
            <person name="Mohammad F."/>
            <person name="Buskirk A.R."/>
            <person name="Storz G."/>
        </authorList>
    </citation>
    <scope>IDENTIFICATION</scope>
    <scope>INDUCTION</scope>
    <source>
        <strain>K12 / MG1655 / ATCC 47076</strain>
    </source>
</reference>
<proteinExistence type="evidence at protein level"/>